<protein>
    <recommendedName>
        <fullName evidence="1">Nucleoside diphosphate kinase</fullName>
        <shortName evidence="1">NDK</shortName>
        <shortName evidence="1">NDP kinase</shortName>
        <ecNumber evidence="1">2.7.4.6</ecNumber>
    </recommendedName>
    <alternativeName>
        <fullName evidence="1">Nucleoside-2-P kinase</fullName>
    </alternativeName>
</protein>
<accession>B7KYC5</accession>
<organism>
    <name type="scientific">Methylorubrum extorquens (strain CM4 / NCIMB 13688)</name>
    <name type="common">Methylobacterium extorquens</name>
    <dbReference type="NCBI Taxonomy" id="440085"/>
    <lineage>
        <taxon>Bacteria</taxon>
        <taxon>Pseudomonadati</taxon>
        <taxon>Pseudomonadota</taxon>
        <taxon>Alphaproteobacteria</taxon>
        <taxon>Hyphomicrobiales</taxon>
        <taxon>Methylobacteriaceae</taxon>
        <taxon>Methylorubrum</taxon>
    </lineage>
</organism>
<gene>
    <name evidence="1" type="primary">ndk</name>
    <name type="ordered locus">Mchl_2288</name>
</gene>
<sequence>MANERTFSILKPDATRRNITGAVNAVIEAAGLRIVGQRRIRMTREQAEKFYEVHKERPFFGELVEFMTSGPVVVQVLEGENAVAKYREVMGATNPAQAADGTIRKQFAESVGENTVHGSDSADNARLEIAQFFNDADIAA</sequence>
<proteinExistence type="inferred from homology"/>
<keyword id="KW-0067">ATP-binding</keyword>
<keyword id="KW-0963">Cytoplasm</keyword>
<keyword id="KW-0418">Kinase</keyword>
<keyword id="KW-0460">Magnesium</keyword>
<keyword id="KW-0479">Metal-binding</keyword>
<keyword id="KW-0546">Nucleotide metabolism</keyword>
<keyword id="KW-0547">Nucleotide-binding</keyword>
<keyword id="KW-0597">Phosphoprotein</keyword>
<keyword id="KW-0808">Transferase</keyword>
<name>NDK_METC4</name>
<reference key="1">
    <citation type="submission" date="2008-12" db="EMBL/GenBank/DDBJ databases">
        <title>Complete sequence of chromosome of Methylobacterium chloromethanicum CM4.</title>
        <authorList>
            <consortium name="US DOE Joint Genome Institute"/>
            <person name="Lucas S."/>
            <person name="Copeland A."/>
            <person name="Lapidus A."/>
            <person name="Glavina del Rio T."/>
            <person name="Dalin E."/>
            <person name="Tice H."/>
            <person name="Bruce D."/>
            <person name="Goodwin L."/>
            <person name="Pitluck S."/>
            <person name="Chertkov O."/>
            <person name="Brettin T."/>
            <person name="Detter J.C."/>
            <person name="Han C."/>
            <person name="Larimer F."/>
            <person name="Land M."/>
            <person name="Hauser L."/>
            <person name="Kyrpides N."/>
            <person name="Mikhailova N."/>
            <person name="Marx C."/>
            <person name="Richardson P."/>
        </authorList>
    </citation>
    <scope>NUCLEOTIDE SEQUENCE [LARGE SCALE GENOMIC DNA]</scope>
    <source>
        <strain>CM4 / NCIMB 13688</strain>
    </source>
</reference>
<evidence type="ECO:0000255" key="1">
    <source>
        <dbReference type="HAMAP-Rule" id="MF_00451"/>
    </source>
</evidence>
<comment type="function">
    <text evidence="1">Major role in the synthesis of nucleoside triphosphates other than ATP. The ATP gamma phosphate is transferred to the NDP beta phosphate via a ping-pong mechanism, using a phosphorylated active-site intermediate.</text>
</comment>
<comment type="catalytic activity">
    <reaction evidence="1">
        <text>a 2'-deoxyribonucleoside 5'-diphosphate + ATP = a 2'-deoxyribonucleoside 5'-triphosphate + ADP</text>
        <dbReference type="Rhea" id="RHEA:44640"/>
        <dbReference type="ChEBI" id="CHEBI:30616"/>
        <dbReference type="ChEBI" id="CHEBI:61560"/>
        <dbReference type="ChEBI" id="CHEBI:73316"/>
        <dbReference type="ChEBI" id="CHEBI:456216"/>
        <dbReference type="EC" id="2.7.4.6"/>
    </reaction>
</comment>
<comment type="catalytic activity">
    <reaction evidence="1">
        <text>a ribonucleoside 5'-diphosphate + ATP = a ribonucleoside 5'-triphosphate + ADP</text>
        <dbReference type="Rhea" id="RHEA:18113"/>
        <dbReference type="ChEBI" id="CHEBI:30616"/>
        <dbReference type="ChEBI" id="CHEBI:57930"/>
        <dbReference type="ChEBI" id="CHEBI:61557"/>
        <dbReference type="ChEBI" id="CHEBI:456216"/>
        <dbReference type="EC" id="2.7.4.6"/>
    </reaction>
</comment>
<comment type="cofactor">
    <cofactor evidence="1">
        <name>Mg(2+)</name>
        <dbReference type="ChEBI" id="CHEBI:18420"/>
    </cofactor>
</comment>
<comment type="subunit">
    <text evidence="1">Homotetramer.</text>
</comment>
<comment type="subcellular location">
    <subcellularLocation>
        <location evidence="1">Cytoplasm</location>
    </subcellularLocation>
</comment>
<comment type="similarity">
    <text evidence="1">Belongs to the NDK family.</text>
</comment>
<dbReference type="EC" id="2.7.4.6" evidence="1"/>
<dbReference type="EMBL" id="CP001298">
    <property type="protein sequence ID" value="ACK83134.1"/>
    <property type="molecule type" value="Genomic_DNA"/>
</dbReference>
<dbReference type="RefSeq" id="WP_003598598.1">
    <property type="nucleotide sequence ID" value="NC_011757.1"/>
</dbReference>
<dbReference type="SMR" id="B7KYC5"/>
<dbReference type="KEGG" id="mch:Mchl_2288"/>
<dbReference type="HOGENOM" id="CLU_060216_8_1_5"/>
<dbReference type="Proteomes" id="UP000002385">
    <property type="component" value="Chromosome"/>
</dbReference>
<dbReference type="GO" id="GO:0005737">
    <property type="term" value="C:cytoplasm"/>
    <property type="evidence" value="ECO:0007669"/>
    <property type="project" value="UniProtKB-SubCell"/>
</dbReference>
<dbReference type="GO" id="GO:0005524">
    <property type="term" value="F:ATP binding"/>
    <property type="evidence" value="ECO:0007669"/>
    <property type="project" value="UniProtKB-UniRule"/>
</dbReference>
<dbReference type="GO" id="GO:0046872">
    <property type="term" value="F:metal ion binding"/>
    <property type="evidence" value="ECO:0007669"/>
    <property type="project" value="UniProtKB-KW"/>
</dbReference>
<dbReference type="GO" id="GO:0004550">
    <property type="term" value="F:nucleoside diphosphate kinase activity"/>
    <property type="evidence" value="ECO:0007669"/>
    <property type="project" value="UniProtKB-UniRule"/>
</dbReference>
<dbReference type="GO" id="GO:0006241">
    <property type="term" value="P:CTP biosynthetic process"/>
    <property type="evidence" value="ECO:0007669"/>
    <property type="project" value="UniProtKB-UniRule"/>
</dbReference>
<dbReference type="GO" id="GO:0006183">
    <property type="term" value="P:GTP biosynthetic process"/>
    <property type="evidence" value="ECO:0007669"/>
    <property type="project" value="UniProtKB-UniRule"/>
</dbReference>
<dbReference type="GO" id="GO:0006228">
    <property type="term" value="P:UTP biosynthetic process"/>
    <property type="evidence" value="ECO:0007669"/>
    <property type="project" value="UniProtKB-UniRule"/>
</dbReference>
<dbReference type="CDD" id="cd04413">
    <property type="entry name" value="NDPk_I"/>
    <property type="match status" value="1"/>
</dbReference>
<dbReference type="FunFam" id="3.30.70.141:FF:000003">
    <property type="entry name" value="Nucleoside diphosphate kinase"/>
    <property type="match status" value="1"/>
</dbReference>
<dbReference type="Gene3D" id="3.30.70.141">
    <property type="entry name" value="Nucleoside diphosphate kinase-like domain"/>
    <property type="match status" value="1"/>
</dbReference>
<dbReference type="HAMAP" id="MF_00451">
    <property type="entry name" value="NDP_kinase"/>
    <property type="match status" value="1"/>
</dbReference>
<dbReference type="InterPro" id="IPR034907">
    <property type="entry name" value="NDK-like_dom"/>
</dbReference>
<dbReference type="InterPro" id="IPR036850">
    <property type="entry name" value="NDK-like_dom_sf"/>
</dbReference>
<dbReference type="InterPro" id="IPR001564">
    <property type="entry name" value="Nucleoside_diP_kinase"/>
</dbReference>
<dbReference type="NCBIfam" id="NF001908">
    <property type="entry name" value="PRK00668.1"/>
    <property type="match status" value="1"/>
</dbReference>
<dbReference type="PANTHER" id="PTHR46161">
    <property type="entry name" value="NUCLEOSIDE DIPHOSPHATE KINASE"/>
    <property type="match status" value="1"/>
</dbReference>
<dbReference type="PANTHER" id="PTHR46161:SF3">
    <property type="entry name" value="NUCLEOSIDE DIPHOSPHATE KINASE DDB_G0292928-RELATED"/>
    <property type="match status" value="1"/>
</dbReference>
<dbReference type="Pfam" id="PF00334">
    <property type="entry name" value="NDK"/>
    <property type="match status" value="1"/>
</dbReference>
<dbReference type="PRINTS" id="PR01243">
    <property type="entry name" value="NUCDPKINASE"/>
</dbReference>
<dbReference type="SMART" id="SM00562">
    <property type="entry name" value="NDK"/>
    <property type="match status" value="1"/>
</dbReference>
<dbReference type="SUPFAM" id="SSF54919">
    <property type="entry name" value="Nucleoside diphosphate kinase, NDK"/>
    <property type="match status" value="1"/>
</dbReference>
<dbReference type="PROSITE" id="PS51374">
    <property type="entry name" value="NDPK_LIKE"/>
    <property type="match status" value="1"/>
</dbReference>
<feature type="chain" id="PRO_1000135262" description="Nucleoside diphosphate kinase">
    <location>
        <begin position="1"/>
        <end position="140"/>
    </location>
</feature>
<feature type="active site" description="Pros-phosphohistidine intermediate" evidence="1">
    <location>
        <position position="117"/>
    </location>
</feature>
<feature type="binding site" evidence="1">
    <location>
        <position position="11"/>
    </location>
    <ligand>
        <name>ATP</name>
        <dbReference type="ChEBI" id="CHEBI:30616"/>
    </ligand>
</feature>
<feature type="binding site" evidence="1">
    <location>
        <position position="59"/>
    </location>
    <ligand>
        <name>ATP</name>
        <dbReference type="ChEBI" id="CHEBI:30616"/>
    </ligand>
</feature>
<feature type="binding site" evidence="1">
    <location>
        <position position="87"/>
    </location>
    <ligand>
        <name>ATP</name>
        <dbReference type="ChEBI" id="CHEBI:30616"/>
    </ligand>
</feature>
<feature type="binding site" evidence="1">
    <location>
        <position position="93"/>
    </location>
    <ligand>
        <name>ATP</name>
        <dbReference type="ChEBI" id="CHEBI:30616"/>
    </ligand>
</feature>
<feature type="binding site" evidence="1">
    <location>
        <position position="104"/>
    </location>
    <ligand>
        <name>ATP</name>
        <dbReference type="ChEBI" id="CHEBI:30616"/>
    </ligand>
</feature>
<feature type="binding site" evidence="1">
    <location>
        <position position="114"/>
    </location>
    <ligand>
        <name>ATP</name>
        <dbReference type="ChEBI" id="CHEBI:30616"/>
    </ligand>
</feature>